<gene>
    <name evidence="2" type="primary">TFB2M</name>
</gene>
<accession>Q32LD4</accession>
<organism>
    <name type="scientific">Bos taurus</name>
    <name type="common">Bovine</name>
    <dbReference type="NCBI Taxonomy" id="9913"/>
    <lineage>
        <taxon>Eukaryota</taxon>
        <taxon>Metazoa</taxon>
        <taxon>Chordata</taxon>
        <taxon>Craniata</taxon>
        <taxon>Vertebrata</taxon>
        <taxon>Euteleostomi</taxon>
        <taxon>Mammalia</taxon>
        <taxon>Eutheria</taxon>
        <taxon>Laurasiatheria</taxon>
        <taxon>Artiodactyla</taxon>
        <taxon>Ruminantia</taxon>
        <taxon>Pecora</taxon>
        <taxon>Bovidae</taxon>
        <taxon>Bovinae</taxon>
        <taxon>Bos</taxon>
    </lineage>
</organism>
<proteinExistence type="evidence at transcript level"/>
<keyword id="KW-0489">Methyltransferase</keyword>
<keyword id="KW-0496">Mitochondrion</keyword>
<keyword id="KW-1185">Reference proteome</keyword>
<keyword id="KW-0694">RNA-binding</keyword>
<keyword id="KW-0698">rRNA processing</keyword>
<keyword id="KW-0949">S-adenosyl-L-methionine</keyword>
<keyword id="KW-0804">Transcription</keyword>
<keyword id="KW-0805">Transcription regulation</keyword>
<keyword id="KW-0808">Transferase</keyword>
<keyword id="KW-0809">Transit peptide</keyword>
<sequence length="394" mass="44952">MWVPGAGIPSRLTLSAFTRAARFCVLNSGVARWKDVPAENCRGLYDFHTQLKPDVEFGKLSSRLYKSRSETKRYVTSPRVAETVVRVLRGKRKAGQLILECNPGPGVLTRALLESGARVIALESDKNFIPELKSLGNSVNGRLEVIYCDFFKLDPRNHGMVTPPVMTSDMLFQYLGVKAHPWKKGFPLKVVGILPAKTERNTLWKILHDLYSCSSVYKYGRAELNLFISEKECRKLTANPQTPALYQSLSVLGQTACGIKVLCTEPSSLFDTYAIKGELEKQRHRESLEQNLCFVQLTPHRNLFTGTLTPFNYDVFFHMLRQCFMKRNAKLIDHLPSLSPIDAVHILKQIKKKKDVRVVDMYPKDFLRLFETIECSKDDTCKWLYDEFMEDALS</sequence>
<protein>
    <recommendedName>
        <fullName evidence="2">Dimethyladenosine transferase 2, mitochondrial</fullName>
        <ecNumber evidence="2">2.1.1.-</ecNumber>
    </recommendedName>
    <alternativeName>
        <fullName>Mitochondrial 12S rRNA dimethylase 2</fullName>
    </alternativeName>
    <alternativeName>
        <fullName>Mitochondrial transcription factor B2</fullName>
        <shortName>mtTFB2</shortName>
    </alternativeName>
    <alternativeName>
        <fullName>S-adenosylmethionine-6-N', N'-adenosyl(rRNA) dimethyltransferase 2</fullName>
    </alternativeName>
</protein>
<feature type="transit peptide" description="Mitochondrion" evidence="3">
    <location>
        <begin position="1"/>
        <end position="19"/>
    </location>
</feature>
<feature type="chain" id="PRO_0000273178" description="Dimethyladenosine transferase 2, mitochondrial">
    <location>
        <begin position="20"/>
        <end position="394"/>
    </location>
</feature>
<feature type="region of interest" description="DNA-binding" evidence="2">
    <location>
        <begin position="326"/>
        <end position="327"/>
    </location>
</feature>
<feature type="binding site" evidence="4">
    <location>
        <position position="75"/>
    </location>
    <ligand>
        <name>S-adenosyl-L-methionine</name>
        <dbReference type="ChEBI" id="CHEBI:59789"/>
    </ligand>
</feature>
<feature type="binding site" evidence="4">
    <location>
        <position position="123"/>
    </location>
    <ligand>
        <name>S-adenosyl-L-methionine</name>
        <dbReference type="ChEBI" id="CHEBI:59789"/>
    </ligand>
</feature>
<feature type="binding site" evidence="4">
    <location>
        <position position="149"/>
    </location>
    <ligand>
        <name>S-adenosyl-L-methionine</name>
        <dbReference type="ChEBI" id="CHEBI:59789"/>
    </ligand>
</feature>
<name>TFB2M_BOVIN</name>
<dbReference type="EC" id="2.1.1.-" evidence="2"/>
<dbReference type="EMBL" id="BC109634">
    <property type="protein sequence ID" value="AAI09635.1"/>
    <property type="molecule type" value="mRNA"/>
</dbReference>
<dbReference type="RefSeq" id="NP_001033216.1">
    <property type="nucleotide sequence ID" value="NM_001038127.2"/>
</dbReference>
<dbReference type="SMR" id="Q32LD4"/>
<dbReference type="FunCoup" id="Q32LD4">
    <property type="interactions" value="652"/>
</dbReference>
<dbReference type="STRING" id="9913.ENSBTAP00000000080"/>
<dbReference type="PaxDb" id="9913-ENSBTAP00000000080"/>
<dbReference type="Ensembl" id="ENSBTAT00000000080.6">
    <property type="protein sequence ID" value="ENSBTAP00000000080.4"/>
    <property type="gene ID" value="ENSBTAG00000000072.6"/>
</dbReference>
<dbReference type="GeneID" id="516874"/>
<dbReference type="KEGG" id="bta:516874"/>
<dbReference type="CTD" id="64216"/>
<dbReference type="VEuPathDB" id="HostDB:ENSBTAG00000000072"/>
<dbReference type="VGNC" id="VGNC:35783">
    <property type="gene designation" value="TFB2M"/>
</dbReference>
<dbReference type="eggNOG" id="KOG0820">
    <property type="taxonomic scope" value="Eukaryota"/>
</dbReference>
<dbReference type="GeneTree" id="ENSGT00950000183142"/>
<dbReference type="HOGENOM" id="CLU_051778_1_0_1"/>
<dbReference type="InParanoid" id="Q32LD4"/>
<dbReference type="OMA" id="IFEVPWT"/>
<dbReference type="OrthoDB" id="9895503at2759"/>
<dbReference type="TreeFam" id="TF325100"/>
<dbReference type="Reactome" id="R-BTA-163282">
    <property type="pathway name" value="Mitochondrial transcription initiation"/>
</dbReference>
<dbReference type="Proteomes" id="UP000009136">
    <property type="component" value="Chromosome 16"/>
</dbReference>
<dbReference type="Bgee" id="ENSBTAG00000000072">
    <property type="expression patterns" value="Expressed in tongue muscle and 105 other cell types or tissues"/>
</dbReference>
<dbReference type="GO" id="GO:0005759">
    <property type="term" value="C:mitochondrial matrix"/>
    <property type="evidence" value="ECO:0000318"/>
    <property type="project" value="GO_Central"/>
</dbReference>
<dbReference type="GO" id="GO:0042645">
    <property type="term" value="C:mitochondrial nucleoid"/>
    <property type="evidence" value="ECO:0007669"/>
    <property type="project" value="Ensembl"/>
</dbReference>
<dbReference type="GO" id="GO:0034246">
    <property type="term" value="F:mitochondrial transcription factor activity"/>
    <property type="evidence" value="ECO:0000250"/>
    <property type="project" value="UniProtKB"/>
</dbReference>
<dbReference type="GO" id="GO:0003723">
    <property type="term" value="F:RNA binding"/>
    <property type="evidence" value="ECO:0007669"/>
    <property type="project" value="UniProtKB-KW"/>
</dbReference>
<dbReference type="GO" id="GO:0000179">
    <property type="term" value="F:rRNA (adenine-N6,N6-)-dimethyltransferase activity"/>
    <property type="evidence" value="ECO:0000318"/>
    <property type="project" value="GO_Central"/>
</dbReference>
<dbReference type="GO" id="GO:0008988">
    <property type="term" value="F:rRNA (adenine-N6-)-methyltransferase activity"/>
    <property type="evidence" value="ECO:0007669"/>
    <property type="project" value="RHEA"/>
</dbReference>
<dbReference type="GO" id="GO:0031167">
    <property type="term" value="P:rRNA methylation"/>
    <property type="evidence" value="ECO:0000318"/>
    <property type="project" value="GO_Central"/>
</dbReference>
<dbReference type="GO" id="GO:0006391">
    <property type="term" value="P:transcription initiation at mitochondrial promoter"/>
    <property type="evidence" value="ECO:0000250"/>
    <property type="project" value="UniProtKB"/>
</dbReference>
<dbReference type="FunFam" id="3.40.50.150:FF:000209">
    <property type="entry name" value="rRNA adenine N(6)-methyltransferase"/>
    <property type="match status" value="1"/>
</dbReference>
<dbReference type="Gene3D" id="3.40.50.150">
    <property type="entry name" value="Vaccinia Virus protein VP39"/>
    <property type="match status" value="1"/>
</dbReference>
<dbReference type="InterPro" id="IPR001737">
    <property type="entry name" value="KsgA/Erm"/>
</dbReference>
<dbReference type="InterPro" id="IPR020598">
    <property type="entry name" value="rRNA_Ade_methylase_Trfase_N"/>
</dbReference>
<dbReference type="InterPro" id="IPR029063">
    <property type="entry name" value="SAM-dependent_MTases_sf"/>
</dbReference>
<dbReference type="PANTHER" id="PTHR11727">
    <property type="entry name" value="DIMETHYLADENOSINE TRANSFERASE"/>
    <property type="match status" value="1"/>
</dbReference>
<dbReference type="PANTHER" id="PTHR11727:SF13">
    <property type="entry name" value="DIMETHYLADENOSINE TRANSFERASE 2, MITOCHONDRIAL"/>
    <property type="match status" value="1"/>
</dbReference>
<dbReference type="Pfam" id="PF00398">
    <property type="entry name" value="RrnaAD"/>
    <property type="match status" value="1"/>
</dbReference>
<dbReference type="PIRSF" id="PIRSF027833">
    <property type="entry name" value="MtTFB2"/>
    <property type="match status" value="1"/>
</dbReference>
<dbReference type="SMART" id="SM00650">
    <property type="entry name" value="rADc"/>
    <property type="match status" value="1"/>
</dbReference>
<dbReference type="SUPFAM" id="SSF53335">
    <property type="entry name" value="S-adenosyl-L-methionine-dependent methyltransferases"/>
    <property type="match status" value="1"/>
</dbReference>
<dbReference type="PROSITE" id="PS51689">
    <property type="entry name" value="SAM_RNA_A_N6_MT"/>
    <property type="match status" value="1"/>
</dbReference>
<comment type="function">
    <text evidence="2">S-adenosyl-L-methionine-dependent rRNA methyltransferase which may methylate two specific adjacent adenosines in the loop of a conserved hairpin near the 3'-end of 12S mitochondrial rRNA. Component of the mitochondrial transcription initiation complex, composed at least of TFB2M, TFAM and POLRMT that is required for basal transcription of mitochondrial DNA. In this complex TFAM recruits POLRMT to a specific promoter whereas TFB2M induces structural changes in POLRMT to enable promoter opening and trapping of the DNA non-template strand. Stimulates transcription independently of the methyltransferase activity.</text>
</comment>
<comment type="catalytic activity">
    <reaction evidence="2">
        <text>adenosine in rRNA + S-adenosyl-L-methionine = N(6)-methyladenosine in rRNA + S-adenosyl-L-homocysteine + H(+)</text>
        <dbReference type="Rhea" id="RHEA:58728"/>
        <dbReference type="Rhea" id="RHEA-COMP:15198"/>
        <dbReference type="Rhea" id="RHEA-COMP:15199"/>
        <dbReference type="ChEBI" id="CHEBI:15378"/>
        <dbReference type="ChEBI" id="CHEBI:57856"/>
        <dbReference type="ChEBI" id="CHEBI:59789"/>
        <dbReference type="ChEBI" id="CHEBI:74411"/>
        <dbReference type="ChEBI" id="CHEBI:74449"/>
    </reaction>
</comment>
<comment type="subunit">
    <text evidence="2">Homodimer. Component of the mitochondrial transcription initiation complex, composed at least of TFB2M, TFAM and POLRMT. In this complex TFAM recruits POLRMT to the promoter whereas TFB2M induces structural changes in POLRMT to enable promoter opening and trapping of the DNA non-template strand. Interacts with mitochondrial RNA polymerase POLRMT. Interacts with TFAM.</text>
</comment>
<comment type="subcellular location">
    <subcellularLocation>
        <location evidence="1">Mitochondrion</location>
    </subcellularLocation>
</comment>
<comment type="similarity">
    <text evidence="4">Belongs to the class I-like SAM-binding methyltransferase superfamily. rRNA adenine N(6)-methyltransferase family. KsgA subfamily.</text>
</comment>
<reference key="1">
    <citation type="submission" date="2005-11" db="EMBL/GenBank/DDBJ databases">
        <authorList>
            <consortium name="NIH - Mammalian Gene Collection (MGC) project"/>
        </authorList>
    </citation>
    <scope>NUCLEOTIDE SEQUENCE [LARGE SCALE MRNA]</scope>
    <source>
        <strain>Crossbred X Angus</strain>
        <tissue>Liver</tissue>
    </source>
</reference>
<evidence type="ECO:0000250" key="1"/>
<evidence type="ECO:0000250" key="2">
    <source>
        <dbReference type="UniProtKB" id="Q9H5Q4"/>
    </source>
</evidence>
<evidence type="ECO:0000255" key="3"/>
<evidence type="ECO:0000255" key="4">
    <source>
        <dbReference type="PROSITE-ProRule" id="PRU01026"/>
    </source>
</evidence>